<name>CYB_BALRE</name>
<dbReference type="EMBL" id="U27543">
    <property type="protein sequence ID" value="AAA69784.1"/>
    <property type="molecule type" value="Genomic_DNA"/>
</dbReference>
<dbReference type="RefSeq" id="YP_007624291.1">
    <property type="nucleotide sequence ID" value="NC_020569.1"/>
</dbReference>
<dbReference type="SMR" id="Q33989"/>
<dbReference type="GeneID" id="14840832"/>
<dbReference type="CTD" id="4519"/>
<dbReference type="GO" id="GO:0005743">
    <property type="term" value="C:mitochondrial inner membrane"/>
    <property type="evidence" value="ECO:0007669"/>
    <property type="project" value="UniProtKB-SubCell"/>
</dbReference>
<dbReference type="GO" id="GO:0045275">
    <property type="term" value="C:respiratory chain complex III"/>
    <property type="evidence" value="ECO:0007669"/>
    <property type="project" value="InterPro"/>
</dbReference>
<dbReference type="GO" id="GO:0046872">
    <property type="term" value="F:metal ion binding"/>
    <property type="evidence" value="ECO:0007669"/>
    <property type="project" value="UniProtKB-KW"/>
</dbReference>
<dbReference type="GO" id="GO:0008121">
    <property type="term" value="F:ubiquinol-cytochrome-c reductase activity"/>
    <property type="evidence" value="ECO:0007669"/>
    <property type="project" value="InterPro"/>
</dbReference>
<dbReference type="GO" id="GO:0006122">
    <property type="term" value="P:mitochondrial electron transport, ubiquinol to cytochrome c"/>
    <property type="evidence" value="ECO:0007669"/>
    <property type="project" value="TreeGrafter"/>
</dbReference>
<dbReference type="CDD" id="cd00290">
    <property type="entry name" value="cytochrome_b_C"/>
    <property type="match status" value="1"/>
</dbReference>
<dbReference type="CDD" id="cd00284">
    <property type="entry name" value="Cytochrome_b_N"/>
    <property type="match status" value="1"/>
</dbReference>
<dbReference type="FunFam" id="1.20.810.10:FF:000002">
    <property type="entry name" value="Cytochrome b"/>
    <property type="match status" value="1"/>
</dbReference>
<dbReference type="Gene3D" id="1.20.810.10">
    <property type="entry name" value="Cytochrome Bc1 Complex, Chain C"/>
    <property type="match status" value="1"/>
</dbReference>
<dbReference type="InterPro" id="IPR005798">
    <property type="entry name" value="Cyt_b/b6_C"/>
</dbReference>
<dbReference type="InterPro" id="IPR036150">
    <property type="entry name" value="Cyt_b/b6_C_sf"/>
</dbReference>
<dbReference type="InterPro" id="IPR005797">
    <property type="entry name" value="Cyt_b/b6_N"/>
</dbReference>
<dbReference type="InterPro" id="IPR027387">
    <property type="entry name" value="Cytb/b6-like_sf"/>
</dbReference>
<dbReference type="InterPro" id="IPR030689">
    <property type="entry name" value="Cytochrome_b"/>
</dbReference>
<dbReference type="InterPro" id="IPR048260">
    <property type="entry name" value="Cytochrome_b_C_euk/bac"/>
</dbReference>
<dbReference type="InterPro" id="IPR048259">
    <property type="entry name" value="Cytochrome_b_N_euk/bac"/>
</dbReference>
<dbReference type="InterPro" id="IPR016174">
    <property type="entry name" value="Di-haem_cyt_TM"/>
</dbReference>
<dbReference type="PANTHER" id="PTHR19271">
    <property type="entry name" value="CYTOCHROME B"/>
    <property type="match status" value="1"/>
</dbReference>
<dbReference type="PANTHER" id="PTHR19271:SF16">
    <property type="entry name" value="CYTOCHROME B"/>
    <property type="match status" value="1"/>
</dbReference>
<dbReference type="Pfam" id="PF00032">
    <property type="entry name" value="Cytochrom_B_C"/>
    <property type="match status" value="1"/>
</dbReference>
<dbReference type="Pfam" id="PF00033">
    <property type="entry name" value="Cytochrome_B"/>
    <property type="match status" value="1"/>
</dbReference>
<dbReference type="PIRSF" id="PIRSF038885">
    <property type="entry name" value="COB"/>
    <property type="match status" value="1"/>
</dbReference>
<dbReference type="SUPFAM" id="SSF81648">
    <property type="entry name" value="a domain/subunit of cytochrome bc1 complex (Ubiquinol-cytochrome c reductase)"/>
    <property type="match status" value="1"/>
</dbReference>
<dbReference type="SUPFAM" id="SSF81342">
    <property type="entry name" value="Transmembrane di-heme cytochromes"/>
    <property type="match status" value="1"/>
</dbReference>
<dbReference type="PROSITE" id="PS51003">
    <property type="entry name" value="CYTB_CTER"/>
    <property type="match status" value="1"/>
</dbReference>
<dbReference type="PROSITE" id="PS51002">
    <property type="entry name" value="CYTB_NTER"/>
    <property type="match status" value="1"/>
</dbReference>
<protein>
    <recommendedName>
        <fullName>Cytochrome b</fullName>
    </recommendedName>
    <alternativeName>
        <fullName>Complex III subunit 3</fullName>
    </alternativeName>
    <alternativeName>
        <fullName>Complex III subunit III</fullName>
    </alternativeName>
    <alternativeName>
        <fullName>Cytochrome b-c1 complex subunit 3</fullName>
    </alternativeName>
    <alternativeName>
        <fullName>Ubiquinol-cytochrome-c reductase complex cytochrome b subunit</fullName>
    </alternativeName>
</protein>
<geneLocation type="mitochondrion"/>
<comment type="function">
    <text evidence="2">Component of the ubiquinol-cytochrome c reductase complex (complex III or cytochrome b-c1 complex) that is part of the mitochondrial respiratory chain. The b-c1 complex mediates electron transfer from ubiquinol to cytochrome c. Contributes to the generation of a proton gradient across the mitochondrial membrane that is then used for ATP synthesis.</text>
</comment>
<comment type="cofactor">
    <cofactor evidence="2">
        <name>heme b</name>
        <dbReference type="ChEBI" id="CHEBI:60344"/>
    </cofactor>
    <text evidence="2">Binds 2 heme b groups non-covalently.</text>
</comment>
<comment type="subunit">
    <text evidence="2">The cytochrome bc1 complex contains 11 subunits: 3 respiratory subunits (MT-CYB, CYC1 and UQCRFS1), 2 core proteins (UQCRC1 and UQCRC2) and 6 low-molecular weight proteins (UQCRH/QCR6, UQCRB/QCR7, UQCRQ/QCR8, UQCR10/QCR9, UQCR11/QCR10 and a cleavage product of UQCRFS1). This cytochrome bc1 complex then forms a dimer.</text>
</comment>
<comment type="subcellular location">
    <subcellularLocation>
        <location evidence="2">Mitochondrion inner membrane</location>
        <topology evidence="2">Multi-pass membrane protein</topology>
    </subcellularLocation>
</comment>
<comment type="miscellaneous">
    <text evidence="1">Heme 1 (or BL or b562) is low-potential and absorbs at about 562 nm, and heme 2 (or BH or b566) is high-potential and absorbs at about 566 nm.</text>
</comment>
<comment type="similarity">
    <text evidence="3 4">Belongs to the cytochrome b family.</text>
</comment>
<comment type="caution">
    <text evidence="2">The full-length protein contains only eight transmembrane helices, not nine as predicted by bioinformatics tools.</text>
</comment>
<gene>
    <name type="primary">MT-CYB</name>
    <name type="synonym">COB</name>
    <name type="synonym">CYTB</name>
    <name type="synonym">MTCYB</name>
</gene>
<reference key="1">
    <citation type="journal article" date="1994" name="Auk">
        <title>Phylogeny of cranes (Gruiformes: Gruidae) based on cytochrome-b DNA sequences.</title>
        <authorList>
            <person name="Krajewski C.W."/>
            <person name="Fetzner J.W."/>
        </authorList>
    </citation>
    <scope>NUCLEOTIDE SEQUENCE [GENOMIC DNA]</scope>
</reference>
<sequence>MAPNLRKSHPLLKMINNSLIDLPTPSNISVWWNFGSLLGICLTTQILTGLLLAAHYTADTTLAFSSVAHTCRNVQHGWLIRNLHANGASFFFICIYMHIGRGLYYGSYLYKETWNTGVILLLTLMATAFVGYVLPWGQMSFWGATVITNLFSAIPYIGQTIVEWAWGGFSVDNPTLTRFFTLHFLLPFMIMGLTLIHLTFLHESGSNNPLGIVSNCDKIPFHPYFSLKDTLGFMLMFLPLMTLALFSPNLLGDPENFTPANPLVTPPHIKPEWYFLFAYGFLRSIPNKLGGVLALAASMLILFLAPLLHKSKQRTMTFRPLSQLLFWTLTANLLILTWVGSQPVEHPFIIIGQLASLTYFTILLILFPMTGALENKMLNY</sequence>
<evidence type="ECO:0000250" key="1"/>
<evidence type="ECO:0000250" key="2">
    <source>
        <dbReference type="UniProtKB" id="P00157"/>
    </source>
</evidence>
<evidence type="ECO:0000255" key="3">
    <source>
        <dbReference type="PROSITE-ProRule" id="PRU00967"/>
    </source>
</evidence>
<evidence type="ECO:0000255" key="4">
    <source>
        <dbReference type="PROSITE-ProRule" id="PRU00968"/>
    </source>
</evidence>
<proteinExistence type="inferred from homology"/>
<organism>
    <name type="scientific">Balearica regulorum</name>
    <name type="common">Grey crowned-crane</name>
    <name type="synonym">Anthropoides regulorum</name>
    <dbReference type="NCBI Taxonomy" id="925459"/>
    <lineage>
        <taxon>Eukaryota</taxon>
        <taxon>Metazoa</taxon>
        <taxon>Chordata</taxon>
        <taxon>Craniata</taxon>
        <taxon>Vertebrata</taxon>
        <taxon>Euteleostomi</taxon>
        <taxon>Archelosauria</taxon>
        <taxon>Archosauria</taxon>
        <taxon>Dinosauria</taxon>
        <taxon>Saurischia</taxon>
        <taxon>Theropoda</taxon>
        <taxon>Coelurosauria</taxon>
        <taxon>Aves</taxon>
        <taxon>Neognathae</taxon>
        <taxon>Neoaves</taxon>
        <taxon>Gruiformes</taxon>
        <taxon>Gruidae</taxon>
        <taxon>Balearica</taxon>
    </lineage>
</organism>
<accession>Q33989</accession>
<keyword id="KW-0249">Electron transport</keyword>
<keyword id="KW-0349">Heme</keyword>
<keyword id="KW-0408">Iron</keyword>
<keyword id="KW-0472">Membrane</keyword>
<keyword id="KW-0479">Metal-binding</keyword>
<keyword id="KW-0496">Mitochondrion</keyword>
<keyword id="KW-0999">Mitochondrion inner membrane</keyword>
<keyword id="KW-0679">Respiratory chain</keyword>
<keyword id="KW-0812">Transmembrane</keyword>
<keyword id="KW-1133">Transmembrane helix</keyword>
<keyword id="KW-0813">Transport</keyword>
<keyword id="KW-0830">Ubiquinone</keyword>
<feature type="chain" id="PRO_0000060667" description="Cytochrome b">
    <location>
        <begin position="1"/>
        <end position="380"/>
    </location>
</feature>
<feature type="transmembrane region" description="Helical" evidence="2">
    <location>
        <begin position="34"/>
        <end position="54"/>
    </location>
</feature>
<feature type="transmembrane region" description="Helical" evidence="2">
    <location>
        <begin position="78"/>
        <end position="99"/>
    </location>
</feature>
<feature type="transmembrane region" description="Helical" evidence="2">
    <location>
        <begin position="114"/>
        <end position="134"/>
    </location>
</feature>
<feature type="transmembrane region" description="Helical" evidence="2">
    <location>
        <begin position="179"/>
        <end position="199"/>
    </location>
</feature>
<feature type="transmembrane region" description="Helical" evidence="2">
    <location>
        <begin position="227"/>
        <end position="247"/>
    </location>
</feature>
<feature type="transmembrane region" description="Helical" evidence="2">
    <location>
        <begin position="289"/>
        <end position="309"/>
    </location>
</feature>
<feature type="transmembrane region" description="Helical" evidence="2">
    <location>
        <begin position="321"/>
        <end position="341"/>
    </location>
</feature>
<feature type="transmembrane region" description="Helical" evidence="2">
    <location>
        <begin position="348"/>
        <end position="368"/>
    </location>
</feature>
<feature type="binding site" description="axial binding residue" evidence="2">
    <location>
        <position position="84"/>
    </location>
    <ligand>
        <name>heme b</name>
        <dbReference type="ChEBI" id="CHEBI:60344"/>
        <label>b562</label>
    </ligand>
    <ligandPart>
        <name>Fe</name>
        <dbReference type="ChEBI" id="CHEBI:18248"/>
    </ligandPart>
</feature>
<feature type="binding site" description="axial binding residue" evidence="2">
    <location>
        <position position="98"/>
    </location>
    <ligand>
        <name>heme b</name>
        <dbReference type="ChEBI" id="CHEBI:60344"/>
        <label>b566</label>
    </ligand>
    <ligandPart>
        <name>Fe</name>
        <dbReference type="ChEBI" id="CHEBI:18248"/>
    </ligandPart>
</feature>
<feature type="binding site" description="axial binding residue" evidence="2">
    <location>
        <position position="183"/>
    </location>
    <ligand>
        <name>heme b</name>
        <dbReference type="ChEBI" id="CHEBI:60344"/>
        <label>b562</label>
    </ligand>
    <ligandPart>
        <name>Fe</name>
        <dbReference type="ChEBI" id="CHEBI:18248"/>
    </ligandPart>
</feature>
<feature type="binding site" description="axial binding residue" evidence="2">
    <location>
        <position position="197"/>
    </location>
    <ligand>
        <name>heme b</name>
        <dbReference type="ChEBI" id="CHEBI:60344"/>
        <label>b566</label>
    </ligand>
    <ligandPart>
        <name>Fe</name>
        <dbReference type="ChEBI" id="CHEBI:18248"/>
    </ligandPart>
</feature>
<feature type="binding site" evidence="2">
    <location>
        <position position="202"/>
    </location>
    <ligand>
        <name>a ubiquinone</name>
        <dbReference type="ChEBI" id="CHEBI:16389"/>
    </ligand>
</feature>